<gene>
    <name evidence="1" type="primary">yciB</name>
    <name type="ordered locus">Ajs_1675</name>
</gene>
<comment type="function">
    <text evidence="1">Plays a role in cell envelope biogenesis, maintenance of cell envelope integrity and membrane homeostasis.</text>
</comment>
<comment type="subcellular location">
    <subcellularLocation>
        <location evidence="1">Cell inner membrane</location>
        <topology evidence="1">Multi-pass membrane protein</topology>
    </subcellularLocation>
</comment>
<comment type="similarity">
    <text evidence="1">Belongs to the YciB family.</text>
</comment>
<dbReference type="EMBL" id="CP000539">
    <property type="protein sequence ID" value="ABM41866.1"/>
    <property type="molecule type" value="Genomic_DNA"/>
</dbReference>
<dbReference type="STRING" id="232721.Ajs_1675"/>
<dbReference type="KEGG" id="ajs:Ajs_1675"/>
<dbReference type="eggNOG" id="COG2917">
    <property type="taxonomic scope" value="Bacteria"/>
</dbReference>
<dbReference type="HOGENOM" id="CLU_089554_2_0_4"/>
<dbReference type="Proteomes" id="UP000000645">
    <property type="component" value="Chromosome"/>
</dbReference>
<dbReference type="GO" id="GO:0005886">
    <property type="term" value="C:plasma membrane"/>
    <property type="evidence" value="ECO:0007669"/>
    <property type="project" value="UniProtKB-SubCell"/>
</dbReference>
<dbReference type="HAMAP" id="MF_00189">
    <property type="entry name" value="YciB"/>
    <property type="match status" value="1"/>
</dbReference>
<dbReference type="InterPro" id="IPR006008">
    <property type="entry name" value="YciB"/>
</dbReference>
<dbReference type="NCBIfam" id="TIGR00997">
    <property type="entry name" value="ispZ"/>
    <property type="match status" value="1"/>
</dbReference>
<dbReference type="NCBIfam" id="NF001325">
    <property type="entry name" value="PRK00259.1-3"/>
    <property type="match status" value="1"/>
</dbReference>
<dbReference type="PANTHER" id="PTHR36917:SF1">
    <property type="entry name" value="INNER MEMBRANE-SPANNING PROTEIN YCIB"/>
    <property type="match status" value="1"/>
</dbReference>
<dbReference type="PANTHER" id="PTHR36917">
    <property type="entry name" value="INTRACELLULAR SEPTATION PROTEIN A-RELATED"/>
    <property type="match status" value="1"/>
</dbReference>
<dbReference type="Pfam" id="PF04279">
    <property type="entry name" value="IspA"/>
    <property type="match status" value="1"/>
</dbReference>
<evidence type="ECO:0000255" key="1">
    <source>
        <dbReference type="HAMAP-Rule" id="MF_00189"/>
    </source>
</evidence>
<feature type="chain" id="PRO_1000020978" description="Inner membrane-spanning protein YciB">
    <location>
        <begin position="1"/>
        <end position="186"/>
    </location>
</feature>
<feature type="transmembrane region" description="Helical" evidence="1">
    <location>
        <begin position="10"/>
        <end position="30"/>
    </location>
</feature>
<feature type="transmembrane region" description="Helical" evidence="1">
    <location>
        <begin position="47"/>
        <end position="67"/>
    </location>
</feature>
<feature type="transmembrane region" description="Helical" evidence="1">
    <location>
        <begin position="76"/>
        <end position="96"/>
    </location>
</feature>
<feature type="transmembrane region" description="Helical" evidence="1">
    <location>
        <begin position="121"/>
        <end position="141"/>
    </location>
</feature>
<feature type="transmembrane region" description="Helical" evidence="1">
    <location>
        <begin position="149"/>
        <end position="169"/>
    </location>
</feature>
<proteinExistence type="inferred from homology"/>
<sequence length="186" mass="20887">MKLLIDFFPIILFFAAFKVWGIYVATAVAIAATVVQIGYIRLKHGKVEPLQWLSLGVIVLFGGATLLAHSETFIKWKPTVLYWLMGGTLLVGQLVFRKNFIQSLMGAQIDLPAPVWRNLNWGWTGFFATMGVLNLWVAYNFDTDTWVNFKLFGGIGLMFAFVIAQALYLSRHVKDEGDAAPKDLQP</sequence>
<name>YCIB_ACISJ</name>
<organism>
    <name type="scientific">Acidovorax sp. (strain JS42)</name>
    <dbReference type="NCBI Taxonomy" id="232721"/>
    <lineage>
        <taxon>Bacteria</taxon>
        <taxon>Pseudomonadati</taxon>
        <taxon>Pseudomonadota</taxon>
        <taxon>Betaproteobacteria</taxon>
        <taxon>Burkholderiales</taxon>
        <taxon>Comamonadaceae</taxon>
        <taxon>Acidovorax</taxon>
    </lineage>
</organism>
<keyword id="KW-0997">Cell inner membrane</keyword>
<keyword id="KW-1003">Cell membrane</keyword>
<keyword id="KW-0472">Membrane</keyword>
<keyword id="KW-0812">Transmembrane</keyword>
<keyword id="KW-1133">Transmembrane helix</keyword>
<accession>A1W6J1</accession>
<protein>
    <recommendedName>
        <fullName evidence="1">Inner membrane-spanning protein YciB</fullName>
    </recommendedName>
</protein>
<reference key="1">
    <citation type="submission" date="2006-12" db="EMBL/GenBank/DDBJ databases">
        <title>Complete sequence of chromosome 1 of Acidovorax sp. JS42.</title>
        <authorList>
            <person name="Copeland A."/>
            <person name="Lucas S."/>
            <person name="Lapidus A."/>
            <person name="Barry K."/>
            <person name="Detter J.C."/>
            <person name="Glavina del Rio T."/>
            <person name="Dalin E."/>
            <person name="Tice H."/>
            <person name="Pitluck S."/>
            <person name="Chertkov O."/>
            <person name="Brettin T."/>
            <person name="Bruce D."/>
            <person name="Han C."/>
            <person name="Tapia R."/>
            <person name="Gilna P."/>
            <person name="Schmutz J."/>
            <person name="Larimer F."/>
            <person name="Land M."/>
            <person name="Hauser L."/>
            <person name="Kyrpides N."/>
            <person name="Kim E."/>
            <person name="Stahl D."/>
            <person name="Richardson P."/>
        </authorList>
    </citation>
    <scope>NUCLEOTIDE SEQUENCE [LARGE SCALE GENOMIC DNA]</scope>
    <source>
        <strain>JS42</strain>
    </source>
</reference>